<name>ATP6_BRUA1</name>
<organism>
    <name type="scientific">Brucella abortus (strain S19)</name>
    <dbReference type="NCBI Taxonomy" id="430066"/>
    <lineage>
        <taxon>Bacteria</taxon>
        <taxon>Pseudomonadati</taxon>
        <taxon>Pseudomonadota</taxon>
        <taxon>Alphaproteobacteria</taxon>
        <taxon>Hyphomicrobiales</taxon>
        <taxon>Brucellaceae</taxon>
        <taxon>Brucella/Ochrobactrum group</taxon>
        <taxon>Brucella</taxon>
    </lineage>
</organism>
<comment type="function">
    <text evidence="1">Key component of the proton channel; it plays a direct role in the translocation of protons across the membrane.</text>
</comment>
<comment type="subunit">
    <text evidence="1">F-type ATPases have 2 components, CF(1) - the catalytic core - and CF(0) - the membrane proton channel. CF(1) has five subunits: alpha(3), beta(3), gamma(1), delta(1), epsilon(1). CF(0) has three main subunits: a(1), b(2) and c(9-12). The alpha and beta chains form an alternating ring which encloses part of the gamma chain. CF(1) is attached to CF(0) by a central stalk formed by the gamma and epsilon chains, while a peripheral stalk is formed by the delta and b chains.</text>
</comment>
<comment type="subcellular location">
    <subcellularLocation>
        <location evidence="1">Cell inner membrane</location>
        <topology evidence="1">Multi-pass membrane protein</topology>
    </subcellularLocation>
</comment>
<comment type="similarity">
    <text evidence="1">Belongs to the ATPase A chain family.</text>
</comment>
<keyword id="KW-0066">ATP synthesis</keyword>
<keyword id="KW-0997">Cell inner membrane</keyword>
<keyword id="KW-1003">Cell membrane</keyword>
<keyword id="KW-0138">CF(0)</keyword>
<keyword id="KW-0375">Hydrogen ion transport</keyword>
<keyword id="KW-0406">Ion transport</keyword>
<keyword id="KW-0472">Membrane</keyword>
<keyword id="KW-0812">Transmembrane</keyword>
<keyword id="KW-1133">Transmembrane helix</keyword>
<keyword id="KW-0813">Transport</keyword>
<dbReference type="EMBL" id="CP000887">
    <property type="protein sequence ID" value="ACD71919.1"/>
    <property type="molecule type" value="Genomic_DNA"/>
</dbReference>
<dbReference type="RefSeq" id="WP_002963543.1">
    <property type="nucleotide sequence ID" value="NC_010742.1"/>
</dbReference>
<dbReference type="SMR" id="B2S9M8"/>
<dbReference type="KEGG" id="bmc:BAbS19_I03800"/>
<dbReference type="HOGENOM" id="CLU_041018_0_2_5"/>
<dbReference type="Proteomes" id="UP000002565">
    <property type="component" value="Chromosome 1"/>
</dbReference>
<dbReference type="GO" id="GO:0005886">
    <property type="term" value="C:plasma membrane"/>
    <property type="evidence" value="ECO:0007669"/>
    <property type="project" value="UniProtKB-SubCell"/>
</dbReference>
<dbReference type="GO" id="GO:0045259">
    <property type="term" value="C:proton-transporting ATP synthase complex"/>
    <property type="evidence" value="ECO:0007669"/>
    <property type="project" value="UniProtKB-KW"/>
</dbReference>
<dbReference type="GO" id="GO:0046933">
    <property type="term" value="F:proton-transporting ATP synthase activity, rotational mechanism"/>
    <property type="evidence" value="ECO:0007669"/>
    <property type="project" value="UniProtKB-UniRule"/>
</dbReference>
<dbReference type="CDD" id="cd00310">
    <property type="entry name" value="ATP-synt_Fo_a_6"/>
    <property type="match status" value="1"/>
</dbReference>
<dbReference type="FunFam" id="1.20.120.220:FF:000003">
    <property type="entry name" value="ATP synthase subunit a"/>
    <property type="match status" value="1"/>
</dbReference>
<dbReference type="Gene3D" id="1.20.120.220">
    <property type="entry name" value="ATP synthase, F0 complex, subunit A"/>
    <property type="match status" value="1"/>
</dbReference>
<dbReference type="HAMAP" id="MF_01393">
    <property type="entry name" value="ATP_synth_a_bact"/>
    <property type="match status" value="1"/>
</dbReference>
<dbReference type="InterPro" id="IPR000568">
    <property type="entry name" value="ATP_synth_F0_asu"/>
</dbReference>
<dbReference type="InterPro" id="IPR023011">
    <property type="entry name" value="ATP_synth_F0_asu_AS"/>
</dbReference>
<dbReference type="InterPro" id="IPR045083">
    <property type="entry name" value="ATP_synth_F0_asu_bact/mt"/>
</dbReference>
<dbReference type="InterPro" id="IPR035908">
    <property type="entry name" value="F0_ATP_A_sf"/>
</dbReference>
<dbReference type="NCBIfam" id="TIGR01131">
    <property type="entry name" value="ATP_synt_6_or_A"/>
    <property type="match status" value="1"/>
</dbReference>
<dbReference type="NCBIfam" id="NF004482">
    <property type="entry name" value="PRK05815.2-4"/>
    <property type="match status" value="1"/>
</dbReference>
<dbReference type="PANTHER" id="PTHR11410">
    <property type="entry name" value="ATP SYNTHASE SUBUNIT A"/>
    <property type="match status" value="1"/>
</dbReference>
<dbReference type="PANTHER" id="PTHR11410:SF0">
    <property type="entry name" value="ATP SYNTHASE SUBUNIT A"/>
    <property type="match status" value="1"/>
</dbReference>
<dbReference type="Pfam" id="PF00119">
    <property type="entry name" value="ATP-synt_A"/>
    <property type="match status" value="1"/>
</dbReference>
<dbReference type="PRINTS" id="PR00123">
    <property type="entry name" value="ATPASEA"/>
</dbReference>
<dbReference type="SUPFAM" id="SSF81336">
    <property type="entry name" value="F1F0 ATP synthase subunit A"/>
    <property type="match status" value="1"/>
</dbReference>
<dbReference type="PROSITE" id="PS00449">
    <property type="entry name" value="ATPASE_A"/>
    <property type="match status" value="1"/>
</dbReference>
<gene>
    <name evidence="1" type="primary">atpB</name>
    <name type="ordered locus">BAbS19_I03800</name>
</gene>
<reference key="1">
    <citation type="journal article" date="2008" name="PLoS ONE">
        <title>Genome sequence of Brucella abortus vaccine strain S19 compared to virulent strains yields candidate virulence genes.</title>
        <authorList>
            <person name="Crasta O.R."/>
            <person name="Folkerts O."/>
            <person name="Fei Z."/>
            <person name="Mane S.P."/>
            <person name="Evans C."/>
            <person name="Martino-Catt S."/>
            <person name="Bricker B."/>
            <person name="Yu G."/>
            <person name="Du L."/>
            <person name="Sobral B.W."/>
        </authorList>
    </citation>
    <scope>NUCLEOTIDE SEQUENCE [LARGE SCALE GENOMIC DNA]</scope>
    <source>
        <strain>S19</strain>
    </source>
</reference>
<accession>B2S9M8</accession>
<sequence length="249" mass="26979">MANDPIHQFQVSRWIPIDVGGVDLSFTNVSAFMVATVVLASGFLYLTSSGRGLIPTRLQSVSEMAYEFVATSLRDSAGSKGMKFFPFVFSLFMFVLVANFIGLFPYFYTVTSQIIVTFALSLLVIGTVIFYGFFKHGFGFLKLFVPSGVPGIIVPLVVLIEIISFLSRPISLSVRLFANMLAGHITLKVFAGFVVSLSSLGALGIGGAVLPLLMTVAITALEFLVAFLQAYVFTVLTCMYINDAVHPGH</sequence>
<protein>
    <recommendedName>
        <fullName evidence="1">ATP synthase subunit a</fullName>
    </recommendedName>
    <alternativeName>
        <fullName evidence="1">ATP synthase F0 sector subunit a</fullName>
    </alternativeName>
    <alternativeName>
        <fullName evidence="1">F-ATPase subunit 6</fullName>
    </alternativeName>
</protein>
<proteinExistence type="inferred from homology"/>
<feature type="chain" id="PRO_0000362254" description="ATP synthase subunit a">
    <location>
        <begin position="1"/>
        <end position="249"/>
    </location>
</feature>
<feature type="transmembrane region" description="Helical" evidence="1">
    <location>
        <begin position="26"/>
        <end position="46"/>
    </location>
</feature>
<feature type="transmembrane region" description="Helical" evidence="1">
    <location>
        <begin position="84"/>
        <end position="104"/>
    </location>
</feature>
<feature type="transmembrane region" description="Helical" evidence="1">
    <location>
        <begin position="114"/>
        <end position="134"/>
    </location>
</feature>
<feature type="transmembrane region" description="Helical" evidence="1">
    <location>
        <begin position="143"/>
        <end position="163"/>
    </location>
</feature>
<feature type="transmembrane region" description="Helical" evidence="1">
    <location>
        <begin position="185"/>
        <end position="205"/>
    </location>
</feature>
<feature type="transmembrane region" description="Helical" evidence="1">
    <location>
        <begin position="208"/>
        <end position="228"/>
    </location>
</feature>
<evidence type="ECO:0000255" key="1">
    <source>
        <dbReference type="HAMAP-Rule" id="MF_01393"/>
    </source>
</evidence>